<dbReference type="EC" id="2.7.7.48" evidence="2"/>
<dbReference type="EC" id="3.1.-.-" evidence="3"/>
<dbReference type="EMBL" id="GU997097">
    <property type="protein sequence ID" value="ADZ76455.1"/>
    <property type="molecule type" value="Viral_cRNA"/>
</dbReference>
<dbReference type="SMR" id="V5IVB1"/>
<dbReference type="GO" id="GO:0044220">
    <property type="term" value="C:host cell perinuclear region of cytoplasm"/>
    <property type="evidence" value="ECO:0007669"/>
    <property type="project" value="UniProtKB-SubCell"/>
</dbReference>
<dbReference type="GO" id="GO:0004519">
    <property type="term" value="F:endonuclease activity"/>
    <property type="evidence" value="ECO:0007669"/>
    <property type="project" value="UniProtKB-KW"/>
</dbReference>
<dbReference type="GO" id="GO:0046872">
    <property type="term" value="F:metal ion binding"/>
    <property type="evidence" value="ECO:0007669"/>
    <property type="project" value="UniProtKB-KW"/>
</dbReference>
<dbReference type="GO" id="GO:0000166">
    <property type="term" value="F:nucleotide binding"/>
    <property type="evidence" value="ECO:0007669"/>
    <property type="project" value="UniProtKB-KW"/>
</dbReference>
<dbReference type="GO" id="GO:0003968">
    <property type="term" value="F:RNA-directed RNA polymerase activity"/>
    <property type="evidence" value="ECO:0007669"/>
    <property type="project" value="UniProtKB-KW"/>
</dbReference>
<dbReference type="GO" id="GO:0075526">
    <property type="term" value="P:cap snatching"/>
    <property type="evidence" value="ECO:0007669"/>
    <property type="project" value="UniProtKB-KW"/>
</dbReference>
<dbReference type="GO" id="GO:0006351">
    <property type="term" value="P:DNA-templated transcription"/>
    <property type="evidence" value="ECO:0007669"/>
    <property type="project" value="InterPro"/>
</dbReference>
<dbReference type="GO" id="GO:0039694">
    <property type="term" value="P:viral RNA genome replication"/>
    <property type="evidence" value="ECO:0007669"/>
    <property type="project" value="InterPro"/>
</dbReference>
<dbReference type="InterPro" id="IPR048006">
    <property type="entry name" value="CapSnatch_bunyavir"/>
</dbReference>
<dbReference type="InterPro" id="IPR054155">
    <property type="entry name" value="CapSnatchArena_N"/>
</dbReference>
<dbReference type="InterPro" id="IPR016268">
    <property type="entry name" value="RNA-dir_pol_hantavirus"/>
</dbReference>
<dbReference type="InterPro" id="IPR024378">
    <property type="entry name" value="RNA-dir_pol_N_hantavirus"/>
</dbReference>
<dbReference type="InterPro" id="IPR007099">
    <property type="entry name" value="RNA-dir_pol_NSvirus"/>
</dbReference>
<dbReference type="InterPro" id="IPR007322">
    <property type="entry name" value="RNA_pol_bunyavir"/>
</dbReference>
<dbReference type="NCBIfam" id="TIGR04202">
    <property type="entry name" value="capSnatchArena"/>
    <property type="match status" value="1"/>
</dbReference>
<dbReference type="Pfam" id="PF04196">
    <property type="entry name" value="Bunya_RdRp"/>
    <property type="match status" value="1"/>
</dbReference>
<dbReference type="Pfam" id="PF21991">
    <property type="entry name" value="capSnatchArena"/>
    <property type="match status" value="1"/>
</dbReference>
<dbReference type="Pfam" id="PF12426">
    <property type="entry name" value="DUF3674"/>
    <property type="match status" value="1"/>
</dbReference>
<dbReference type="PIRSF" id="PIRSF000825">
    <property type="entry name" value="L_HantaV"/>
    <property type="match status" value="1"/>
</dbReference>
<dbReference type="PROSITE" id="PS50525">
    <property type="entry name" value="RDRP_SSRNA_NEG_SEG"/>
    <property type="match status" value="1"/>
</dbReference>
<accession>V5IVB1</accession>
<feature type="chain" id="PRO_0000455189" description="RNA-directed RNA polymerase L">
    <location>
        <begin position="1"/>
        <end position="2153"/>
    </location>
</feature>
<feature type="domain" description="RdRp catalytic" evidence="7">
    <location>
        <begin position="957"/>
        <end position="1143"/>
    </location>
</feature>
<feature type="active site" description="For endonuclease activity" evidence="3">
    <location>
        <position position="124"/>
    </location>
</feature>
<feature type="binding site" evidence="5">
    <location>
        <position position="36"/>
    </location>
    <ligand>
        <name>Mn(2+)</name>
        <dbReference type="ChEBI" id="CHEBI:29035"/>
        <label>1</label>
    </ligand>
</feature>
<feature type="binding site" evidence="3">
    <location>
        <position position="54"/>
    </location>
    <ligand>
        <name>Mn(2+)</name>
        <dbReference type="ChEBI" id="CHEBI:29035"/>
        <label>2</label>
    </ligand>
</feature>
<feature type="binding site" evidence="5">
    <location>
        <position position="97"/>
    </location>
    <ligand>
        <name>Mn(2+)</name>
        <dbReference type="ChEBI" id="CHEBI:29035"/>
        <label>1</label>
    </ligand>
</feature>
<feature type="binding site" evidence="5">
    <location>
        <position position="97"/>
    </location>
    <ligand>
        <name>Mn(2+)</name>
        <dbReference type="ChEBI" id="CHEBI:29035"/>
        <label>2</label>
    </ligand>
</feature>
<feature type="binding site" evidence="5">
    <location>
        <position position="110"/>
    </location>
    <ligand>
        <name>Mn(2+)</name>
        <dbReference type="ChEBI" id="CHEBI:29035"/>
        <label>1</label>
    </ligand>
</feature>
<feature type="binding site" evidence="5">
    <location>
        <position position="111"/>
    </location>
    <ligand>
        <name>Mn(2+)</name>
        <dbReference type="ChEBI" id="CHEBI:29035"/>
        <label>1</label>
    </ligand>
</feature>
<feature type="binding site" evidence="2">
    <location>
        <position position="1100"/>
    </location>
    <ligand>
        <name>Mg(2+)</name>
        <dbReference type="ChEBI" id="CHEBI:18420"/>
        <note>catalytic; for RdRp activity</note>
    </ligand>
</feature>
<organism>
    <name type="scientific">Black Creek Canal orthohantavirus</name>
    <name type="common">BCCV</name>
    <name type="synonym">Black Creek Canal virus</name>
    <dbReference type="NCBI Taxonomy" id="3052490"/>
    <lineage>
        <taxon>Viruses</taxon>
        <taxon>Riboviria</taxon>
        <taxon>Orthornavirae</taxon>
        <taxon>Negarnaviricota</taxon>
        <taxon>Polyploviricotina</taxon>
        <taxon>Ellioviricetes</taxon>
        <taxon>Bunyavirales</taxon>
        <taxon>Hantaviridae</taxon>
        <taxon>Mammantavirinae</taxon>
        <taxon>Orthohantavirus</taxon>
    </lineage>
</organism>
<name>L_BCCV</name>
<gene>
    <name evidence="11" type="primary">RdRp</name>
</gene>
<evidence type="ECO:0000250" key="1">
    <source>
        <dbReference type="UniProtKB" id="A2SZS3"/>
    </source>
</evidence>
<evidence type="ECO:0000250" key="2">
    <source>
        <dbReference type="UniProtKB" id="I0DF35"/>
    </source>
</evidence>
<evidence type="ECO:0000250" key="3">
    <source>
        <dbReference type="UniProtKB" id="P23456"/>
    </source>
</evidence>
<evidence type="ECO:0000250" key="4">
    <source>
        <dbReference type="UniProtKB" id="Q89709"/>
    </source>
</evidence>
<evidence type="ECO:0000250" key="5">
    <source>
        <dbReference type="UniProtKB" id="Q9E005"/>
    </source>
</evidence>
<evidence type="ECO:0000250" key="6">
    <source>
        <dbReference type="UniProtKB" id="Q9YQR5"/>
    </source>
</evidence>
<evidence type="ECO:0000255" key="7">
    <source>
        <dbReference type="PROSITE-ProRule" id="PRU00539"/>
    </source>
</evidence>
<evidence type="ECO:0000269" key="8">
    <source>
    </source>
</evidence>
<evidence type="ECO:0000303" key="9">
    <source>
    </source>
</evidence>
<evidence type="ECO:0000305" key="10"/>
<evidence type="ECO:0000312" key="11">
    <source>
        <dbReference type="EMBL" id="ADZ76455.1"/>
    </source>
</evidence>
<proteinExistence type="inferred from homology"/>
<organismHost>
    <name type="scientific">Homo sapiens</name>
    <name type="common">Human</name>
    <dbReference type="NCBI Taxonomy" id="9606"/>
</organismHost>
<organismHost>
    <name type="scientific">Sigmodon hispidus</name>
    <name type="common">Hispid cotton rat</name>
    <dbReference type="NCBI Taxonomy" id="42415"/>
</organismHost>
<keyword id="KW-1157">Cap snatching</keyword>
<keyword id="KW-0255">Endonuclease</keyword>
<keyword id="KW-1035">Host cytoplasm</keyword>
<keyword id="KW-0378">Hydrolase</keyword>
<keyword id="KW-0460">Magnesium</keyword>
<keyword id="KW-0464">Manganese</keyword>
<keyword id="KW-0479">Metal-binding</keyword>
<keyword id="KW-0540">Nuclease</keyword>
<keyword id="KW-0547">Nucleotide-binding</keyword>
<keyword id="KW-0548">Nucleotidyltransferase</keyword>
<keyword id="KW-0696">RNA-directed RNA polymerase</keyword>
<keyword id="KW-0808">Transferase</keyword>
<keyword id="KW-0693">Viral RNA replication</keyword>
<comment type="function">
    <text evidence="5">RNA-dependent RNA polymerase, which is responsible for the replication and transcription of the viral RNA genome using antigenomic RNA as an intermediate (By similarity). During transcription, synthesizes subgenomic RNAs and assures their capping by a cap-snatching mechanism, which involves the endonuclease activity cleaving the host capped pre-mRNAs. These short capped RNAs are then used as primers for viral transcription. Cleaves ssRNA substrates but not DNA (By similarity). Seems to downregulate the expression of its own and heterologous mRNAs through its endonuclease activity (By similarity).</text>
</comment>
<comment type="catalytic activity">
    <reaction evidence="7">
        <text>RNA(n) + a ribonucleoside 5'-triphosphate = RNA(n+1) + diphosphate</text>
        <dbReference type="Rhea" id="RHEA:21248"/>
        <dbReference type="Rhea" id="RHEA-COMP:14527"/>
        <dbReference type="Rhea" id="RHEA-COMP:17342"/>
        <dbReference type="ChEBI" id="CHEBI:33019"/>
        <dbReference type="ChEBI" id="CHEBI:61557"/>
        <dbReference type="ChEBI" id="CHEBI:140395"/>
        <dbReference type="EC" id="2.7.7.48"/>
    </reaction>
</comment>
<comment type="cofactor">
    <cofactor evidence="3">
        <name>Mn(2+)</name>
        <dbReference type="ChEBI" id="CHEBI:29035"/>
    </cofactor>
    <text evidence="3 8">For endonuclease activity. Binds 2 Mn2+ ions in the active site. The divalent metal ions are crucial for catalytic activity (PubMed:31948728).</text>
</comment>
<comment type="cofactor">
    <cofactor evidence="1">
        <name>Mg(2+)</name>
        <dbReference type="ChEBI" id="CHEBI:18420"/>
    </cofactor>
    <cofactor evidence="1">
        <name>Mn(2+)</name>
        <dbReference type="ChEBI" id="CHEBI:29035"/>
    </cofactor>
    <text evidence="1">For polymerase activity.</text>
</comment>
<comment type="subunit">
    <text evidence="4">Interacts with the viral nucleoprotein.</text>
</comment>
<comment type="subcellular location">
    <subcellularLocation>
        <location evidence="6">Host cytoplasm</location>
        <location evidence="6">Host perinuclear region</location>
    </subcellularLocation>
</comment>
<comment type="domain">
    <text evidence="1 2 5">The N-terminus contains the endonuclease activity (endoN) (By similarity). The central region contains the RdRp activity (By similarity). The C-terminus contains the cap-binding region (By similarity).</text>
</comment>
<comment type="miscellaneous">
    <text evidence="9">Classified as His(+) endonuclease since it has a histidine upstream of the active site that coordinates the first cation.</text>
</comment>
<comment type="similarity">
    <text evidence="10">Belongs to the Bunyavirales RNA polymerase family.</text>
</comment>
<protein>
    <recommendedName>
        <fullName>RNA-directed RNA polymerase L</fullName>
        <shortName>Protein L</shortName>
        <ecNumber evidence="2">2.7.7.48</ecNumber>
    </recommendedName>
    <alternativeName>
        <fullName>Large structural protein</fullName>
    </alternativeName>
    <alternativeName>
        <fullName>Replicase</fullName>
    </alternativeName>
    <alternativeName>
        <fullName>Transcriptase</fullName>
    </alternativeName>
    <domain>
        <recommendedName>
            <fullName>cap-snatching endonuclease</fullName>
            <ecNumber evidence="3">3.1.-.-</ecNumber>
        </recommendedName>
    </domain>
</protein>
<sequence>MEKYREIHQRVREIAPGTGSALDCMDLLDRLYAVRHDLVDQMIKHDWSDNKDVETPIGQVLLMAGVPNDIIQGMEKKIIPNSPTGQILKSFFKMTPDNFKITGNQIEFIEVTVTADVARGIREKRLKYESGLRFTEELLELEVKKGNLQQVYRISFNVVAVKTDGSNISTQWPSRRNEGVVQQMRLVQADINYVREHLIMQDERASLEAMFNLKFHVTGPRLRYFSIPDYRPQPLCNPTIDGLLQYCKQWLTEEHKFIFKEVSGTNVMGSFEVNEKKHKERYLESRKPRNFLLLQTTIQGSYLPSTISSDQCNTRIGCLEICKNIPETPVQALASDIAFKYISLDKDEVINYYNPRIHFKPGQNVKEPGTLKIGLSQMNPLSKAILDNIGKHKSDKGLFGQAIESINIASQIQLNECSKVIEQILSNLEINISDVSENIPLPKKTTCVDELLGKFYENEITKYMLGILRKTVAWHIGHLIRDITESLIAHSGLRRSKYWSVHAYDHGNVILFILPSKSLEVAGSYIRFFTVFKDGIGLVDNDNTDSKTEIDGITWIYSKVMSIDLNRLLALNIAFEKALLATATWFQYYTEDQGHFPLQHALRSVFSFHLLLCVSQKMKICAIFDNLRYLIPSVTSLYSGYELLIEKFFERPFKSALDVYLYSIIKSLLVSLAQNNKVRFYSKVRLLGLTVDQSTVGASGVYPSLMSRVVYKHYRSLISEATTCFFLFEKGLHGNLTEEAKIHLETVEWARKFNEKENRYGDILMKEGYTIELVENQNVTVEQQLFCQEVVELSAMELNKYLHAKSQVLCANIMNKHWDKPYFSQVRNISLKGMSGSLQEDGHLASSVTLIEAIRFLNSSQINPNVIDMYERTKHCKAQARIVRKYQRTEADRGFFITTLPTRVRLEIIEDYYDAIAKVVPEEYISYGGERKILNIQSALEKALRWASGISEIITSTGKKIRFKRKLMYVSADATKWSPGDNSAKFRRFTQAIYDGLNDDKLKCCVVDSLKNIYETEFFMSRKLHRYIDSMESKSEAVEDFLSFFSGGVSATVKGNWLQGNLNKCSSLFGVAVSLLFKRVWVELFPELECFFEFAHHSDDALFIYGYLEPEDDGTDWFMYVSQQIQAGHYHWHAVNQEMWKSMFNLHEQLLLMGSIRVSPKKTTVSPTNAEFLSTFFEGCAVSIPFIKILLGSLSDLPGLGFFDDLAASQSRCVKALDLGACPQLAQLAIVLCTSKVERLYGTADGMINSPISFLKVNKAHIPIALGGDGSMSIMELATAGIGMADKNILKKAFYSYKHTKRDGDRYILGLFKFLMSLSDDVFQHDRLGEFSFVGKVQWKVFTPKSEFEFYDQYSMTYLQAWSKQHPVYDYIIPRGRDNLLVYLVRKLNDPSIITAMTMQSPLQLRFRMQAKQHMKVCKLEGEWVTFREILAAADSFASTYQPNEKDLDLFNTLVSCTFSKEYAWKDFLNEVRCEVTTARHVHRPKVARTFTVREKDQVIQNPITSVIGYKYASTVDEISDVLDSAFFPDSLSADLQVMKEGVYRELGLDIGLPEVLKRIAPLLYKAGKSRIVIVEGNIEGTAESICSYWLKNMSLIKTIKVKPRKEVLKAVSLYGTKDNLSLQDDLAATRICIEVWRWCKANNQNVQEWFTALYFENQTLYDWIERFRRKGVVPVDPEIQCMALLLYDVLGFKNVLQMQANRRAYSGKQYDAYCVQTYNEETKLYEGDLRVTFNFGLDCARLEVFWDKKEYVLETSITQKHVLRLMMEEVSKELVRCGMRFKTEQVSHTRSLVLFKTESGFEWGKPNIPCIVYKHCALRTGLRTKHPINKEFMINIQSDGFRAIAQMDIESPRFLLAHAYHTLRDVRYQAVQAVGNVWFRTEQHKLFINPIISSGLLENFMKGLPAAIPPAAYSLIMNKAKISVDLFMFNELLALINKNNILDLSGIEETSEGYSTVTSMSSKQWSEEMSLMSDDDIDDDEEFTIALDDIDFEQVDLEEDIQHFLQDESAYVGDLLIQTEEVEVKRIRGVTRILEPVKLIKSWVSKGLAIDKVYNPVGILLMARYMSKNYDFHSVPLALMNPYDLTEFESVVKGWGETINDRFQEIDLEAQRLVREQNIQPEDILPDSLFSFRHVDVLLKRLFPRDPISSFY</sequence>
<reference key="1">
    <citation type="submission" date="2010-03" db="EMBL/GenBank/DDBJ databases">
        <title>volutionary history of the large (L) genomic segments of hantaviruses native to the New World.</title>
        <authorList>
            <person name="Cajimat M.N.B."/>
            <person name="Richter M.H."/>
            <person name="Milazzo M.L."/>
            <person name="Fulhorst C.F."/>
        </authorList>
    </citation>
    <scope>NUCLEOTIDE SEQUENCE [GENOMIC RNA]</scope>
    <source>
        <strain evidence="11">SPB 9408076</strain>
    </source>
</reference>
<reference key="2">
    <citation type="journal article" date="2005" name="Arch. Virol.">
        <title>L protein, the RNA-dependent RNA polymerase of hantaviruses.</title>
        <authorList>
            <person name="Kukkonen S.K."/>
            <person name="Vaheri A."/>
            <person name="Plyusnin A."/>
        </authorList>
    </citation>
    <scope>REVIEW</scope>
</reference>
<reference key="3">
    <citation type="journal article" date="2017" name="Crit. Rev. Microbiol.">
        <title>Bunyaviridae RdRps: structure, motifs, and RNA synthesis machinery.</title>
        <authorList>
            <person name="Amroun A."/>
            <person name="Priet S."/>
            <person name="de Lamballerie X."/>
            <person name="Querat G."/>
        </authorList>
    </citation>
    <scope>REVIEW</scope>
</reference>
<reference key="4">
    <citation type="journal article" date="2020" name="Trends Microbiol.">
        <title>The Cap-Snatching Mechanism of Bunyaviruses.</title>
        <authorList>
            <person name="Olschewski S."/>
            <person name="Cusack S."/>
            <person name="Rosenthal M."/>
        </authorList>
    </citation>
    <scope>REVIEW</scope>
</reference>